<dbReference type="EMBL" id="AJ132782">
    <property type="protein sequence ID" value="CAB60041.1"/>
    <property type="status" value="ALT_INIT"/>
    <property type="molecule type" value="Genomic_DNA"/>
</dbReference>
<dbReference type="PIR" id="T46729">
    <property type="entry name" value="T46729"/>
</dbReference>
<dbReference type="SMR" id="Q9RLT6"/>
<dbReference type="GO" id="GO:0005737">
    <property type="term" value="C:cytoplasm"/>
    <property type="evidence" value="ECO:0007669"/>
    <property type="project" value="UniProtKB-SubCell"/>
</dbReference>
<dbReference type="HAMAP" id="MF_00805">
    <property type="entry name" value="CitD"/>
    <property type="match status" value="1"/>
</dbReference>
<dbReference type="InterPro" id="IPR006495">
    <property type="entry name" value="CitD"/>
</dbReference>
<dbReference type="InterPro" id="IPR023439">
    <property type="entry name" value="Mal_deCO2ase/Cit_lyase_ACP"/>
</dbReference>
<dbReference type="NCBIfam" id="TIGR01608">
    <property type="entry name" value="citD"/>
    <property type="match status" value="1"/>
</dbReference>
<dbReference type="NCBIfam" id="NF009726">
    <property type="entry name" value="PRK13253.1"/>
    <property type="match status" value="1"/>
</dbReference>
<dbReference type="Pfam" id="PF06857">
    <property type="entry name" value="ACP"/>
    <property type="match status" value="1"/>
</dbReference>
<dbReference type="PIRSF" id="PIRSF002736">
    <property type="entry name" value="Citrt_lyas_gamma"/>
    <property type="match status" value="1"/>
</dbReference>
<proteinExistence type="inferred from homology"/>
<feature type="chain" id="PRO_0000214719" description="Citrate lyase acyl carrier protein">
    <location>
        <begin position="1"/>
        <end position="97"/>
    </location>
</feature>
<feature type="modified residue" description="O-(phosphoribosyl dephospho-coenzyme A)serine" evidence="1">
    <location>
        <position position="14"/>
    </location>
</feature>
<gene>
    <name type="primary">citD</name>
</gene>
<name>CITD_WEIPA</name>
<organism>
    <name type="scientific">Weissella paramesenteroides</name>
    <name type="common">Leuconostoc paramesenteroides</name>
    <dbReference type="NCBI Taxonomy" id="1249"/>
    <lineage>
        <taxon>Bacteria</taxon>
        <taxon>Bacillati</taxon>
        <taxon>Bacillota</taxon>
        <taxon>Bacilli</taxon>
        <taxon>Lactobacillales</taxon>
        <taxon>Lactobacillaceae</taxon>
        <taxon>Weissella</taxon>
    </lineage>
</organism>
<sequence>MEIRKSAVAGTLESSDVQIMLSAGNNGIEFELVSDVAKQFGDAIKETITDVLNTYGVTDAAVSVVDKGALDMVIRARAIAVVQRALDIVDTPNWEVL</sequence>
<protein>
    <recommendedName>
        <fullName>Citrate lyase acyl carrier protein</fullName>
    </recommendedName>
    <alternativeName>
        <fullName>Citrate lyase gamma chain</fullName>
    </alternativeName>
</protein>
<reference key="1">
    <citation type="journal article" date="1999" name="FEMS Microbiol. Lett.">
        <title>Cloning and molecular characterization of the citrate utilization citMCDEFGRP cluster of Leuconostoc paramesenteroides.</title>
        <authorList>
            <person name="Martin M."/>
            <person name="Corrales M."/>
            <person name="de Mendoza D."/>
            <person name="Lopez P."/>
            <person name="Magni C."/>
        </authorList>
    </citation>
    <scope>NUCLEOTIDE SEQUENCE [GENOMIC DNA]</scope>
    <source>
        <strain>J1</strain>
    </source>
</reference>
<evidence type="ECO:0000250" key="1"/>
<evidence type="ECO:0000305" key="2"/>
<comment type="function">
    <text evidence="1">Covalent carrier of the coenzyme of citrate lyase.</text>
</comment>
<comment type="subunit">
    <text evidence="1">Oligomer with a subunit composition of (alpha,beta,gamma)6.</text>
</comment>
<comment type="subcellular location">
    <subcellularLocation>
        <location evidence="1">Cytoplasm</location>
    </subcellularLocation>
</comment>
<comment type="similarity">
    <text evidence="2">Belongs to the CitD family.</text>
</comment>
<comment type="sequence caution" evidence="2">
    <conflict type="erroneous initiation">
        <sequence resource="EMBL-CDS" id="CAB60041"/>
    </conflict>
</comment>
<accession>Q9RLT6</accession>
<keyword id="KW-0963">Cytoplasm</keyword>
<keyword id="KW-0597">Phosphoprotein</keyword>